<protein>
    <recommendedName>
        <fullName evidence="2">Probable thioesterase lcsE</fullName>
        <ecNumber evidence="4">3.1.-.-</ecNumber>
    </recommendedName>
    <alternativeName>
        <fullName evidence="2">Leucinostatins biosynthesis cluster protein E</fullName>
    </alternativeName>
</protein>
<organism>
    <name type="scientific">Purpureocillium lilacinum</name>
    <name type="common">Paecilomyces lilacinus</name>
    <dbReference type="NCBI Taxonomy" id="33203"/>
    <lineage>
        <taxon>Eukaryota</taxon>
        <taxon>Fungi</taxon>
        <taxon>Dikarya</taxon>
        <taxon>Ascomycota</taxon>
        <taxon>Pezizomycotina</taxon>
        <taxon>Sordariomycetes</taxon>
        <taxon>Hypocreomycetidae</taxon>
        <taxon>Hypocreales</taxon>
        <taxon>Ophiocordycipitaceae</taxon>
        <taxon>Purpureocillium</taxon>
    </lineage>
</organism>
<dbReference type="EC" id="3.1.-.-" evidence="4"/>
<dbReference type="EMBL" id="LSBH01000002">
    <property type="protein sequence ID" value="OAQ83769.1"/>
    <property type="molecule type" value="Genomic_DNA"/>
</dbReference>
<dbReference type="EMBL" id="LCWV01000014">
    <property type="protein sequence ID" value="PWI68725.1"/>
    <property type="molecule type" value="Genomic_DNA"/>
</dbReference>
<dbReference type="SMR" id="A0A179H324"/>
<dbReference type="ESTHER" id="purli-lcse">
    <property type="family name" value="Thioesterase"/>
</dbReference>
<dbReference type="OrthoDB" id="10253869at2759"/>
<dbReference type="Proteomes" id="UP000078240">
    <property type="component" value="Unassembled WGS sequence"/>
</dbReference>
<dbReference type="Proteomes" id="UP000245956">
    <property type="component" value="Unassembled WGS sequence"/>
</dbReference>
<dbReference type="GO" id="GO:0016787">
    <property type="term" value="F:hydrolase activity"/>
    <property type="evidence" value="ECO:0007669"/>
    <property type="project" value="UniProtKB-KW"/>
</dbReference>
<dbReference type="Gene3D" id="3.40.50.1820">
    <property type="entry name" value="alpha/beta hydrolase"/>
    <property type="match status" value="1"/>
</dbReference>
<dbReference type="InterPro" id="IPR000073">
    <property type="entry name" value="AB_hydrolase_1"/>
</dbReference>
<dbReference type="InterPro" id="IPR029058">
    <property type="entry name" value="AB_hydrolase_fold"/>
</dbReference>
<dbReference type="Pfam" id="PF12697">
    <property type="entry name" value="Abhydrolase_6"/>
    <property type="match status" value="1"/>
</dbReference>
<dbReference type="SUPFAM" id="SSF53474">
    <property type="entry name" value="alpha/beta-Hydrolases"/>
    <property type="match status" value="1"/>
</dbReference>
<name>LCSE_PURLI</name>
<gene>
    <name evidence="2" type="primary">lcsE</name>
    <name type="ORF">PCL_01814</name>
    <name type="ORF">VFPBJ_02535</name>
</gene>
<evidence type="ECO:0000269" key="1">
    <source>
    </source>
</evidence>
<evidence type="ECO:0000303" key="2">
    <source>
    </source>
</evidence>
<evidence type="ECO:0000305" key="3"/>
<evidence type="ECO:0000305" key="4">
    <source>
    </source>
</evidence>
<keyword id="KW-0378">Hydrolase</keyword>
<sequence>MAPTDRNPVQVQYYAKGKKTTESSGPAPAPLILIHDGGGTTFAYFTIGRLERDVWAIHSPTFTSAQPWEGGMDGMAKHYIELIEKVAGIKGKILLGGWSLGGYVALTMAHMIASSPASFEISIDGILMMDSPWLVAGRDLPIGTPQPALIGIPDLVRKSLDNCERMLYHWELPQWGRSSGKAFKFSAGNEKFETQPGTVLYRSLKGDWRAVERTVSHELTEQQALQTPPSGPPPAVMLRSVIPAPTKGSSGKPCRVDQFRDELLLGWDGKYNTDMIHAVLEARSHHYDMFNQLYVDEVTETIKEAIQIIETVLPNE</sequence>
<feature type="chain" id="PRO_0000446603" description="Probable thioesterase lcsE">
    <location>
        <begin position="1"/>
        <end position="316"/>
    </location>
</feature>
<accession>A0A179H324</accession>
<proteinExistence type="evidence at transcript level"/>
<comment type="function">
    <text evidence="1 4">Probable thioesterase; part of the gene cluster that mediates the biosynthesis of the lipopeptide antibiotics leucinostatins that show extensive biological activities, including antimalarial, antiviral, antibacterial, antifungal, and antitumor activities, as well as phytotoxic (PubMed:27416025). Leucinostatin A contains nine amino acid residues, including the unusual amino acid 4-methyl-L-proline (MePro), 2-amino-6-hydroxy-4-methyl-8-oxodecanoic acid (AHyMeOA), 3-hydroxyleucine (HyLeu), alpha-aminoisobutyric acid (AIB), beta-Ala, a 4-methylhex-2-enoic acid at the N-terminus as well as a N1,N1-dimethylpropane-1,2-diamine (DPD) at the C-terminus (Probable). The biosynthesis of leucinostatins is probably initiated with the assembly of 4-methylhex-2-enoic acid by a reducing PKS. Two reducing polyketide synthases, lcsB and lcsC, have been identified in the cluster and it is not clear which is the one that assembles 4-methylhex-2-enoic acid since both contain KS, AT, DH, cMT, ER, KR and ACP domains (Probable). The polyketide residue might be transferred to the NRPS lcsA, mediated by two additional enzymes, the acyl-CoA ligase lcsD and the thioesterase lcsE. The linear polyketide carboxylic acid, which is released from PKS, is converted to a CoA thioester by lcsD, and then lcsE hydrolyzes the thiol bond and shuttles the polyketide intermediate to lcsA (Probable). The C domain of the first module catalyzed the condensation of 4-methylhex-2-enoic acid and MePro carried by domain A1, followed by successive condensations of nine amino acids to trigger the elongation of the linear peptide. A5 and A6 domains of lcsA are proposed to incorporate leucine, A2 AHyMeOA, and A3 incorporates HyLeu. A4, A7 and A8 incorporate AIB (Probable). The AHyMeOA in leucinostatin A activated by the A2 might be produced by the second PKS (lcsB or lcsC) present within the cluster (Probable). The MePro is probably produced via leucine cyclization and may originate from a separate pathway, independent of the cluster. Another nonproteinogenic amino acid, beta-Ala, could be produced by an aspartic acid decarboxylase also localized outside of the cluster. Two candidates are VFPBJ_01400 and VFPBJ_10476 (Probable). The final peptide scaffold may be released by the NAD(P)H-dependent thioester reductase (TE) at the C-terminal region of lcsA (Probable). Transamination of the lcsA product by the transaminase lcsP may produce DPD at the C-terminus (Probable). Further hydroxylation steps performed alternatively by the cytochrome P450 monooxygenases lcsI, lcsK and lcsN then yield the non-methylated leucinostatins precursor. It is also possible that leucines can be hydroxylated prior to their incorporation into the peptide (Probable). Varying extents of methylation then lead to the formation of leucinostatins A and B (Probable).</text>
</comment>
<comment type="pathway">
    <text evidence="4">Secondary metabolite biosynthesis.</text>
</comment>
<comment type="induction">
    <text evidence="1">Expression is positively regulated by the leucinostatins biosynthesis cluster-specific transcription regulator lcsF.</text>
</comment>
<comment type="disruption phenotype">
    <text evidence="1">Abolishes the production of leucinostatins A and B.</text>
</comment>
<comment type="similarity">
    <text evidence="3">Belongs to the AMT4 thioesterase family.</text>
</comment>
<reference key="1">
    <citation type="journal article" date="2016" name="Front. Microbiol.">
        <title>Genome and transcriptome sequences reveal the specific parasitism of the nematophagous Purpureocillium lilacinum 36-1.</title>
        <authorList>
            <person name="Xie J."/>
            <person name="Li S."/>
            <person name="Mo C."/>
            <person name="Xiao X."/>
            <person name="Peng D."/>
            <person name="Wang G."/>
            <person name="Xiao Y."/>
        </authorList>
    </citation>
    <scope>NUCLEOTIDE SEQUENCE [LARGE SCALE GENOMIC DNA]</scope>
    <source>
        <strain>36-1</strain>
    </source>
</reference>
<reference key="2">
    <citation type="journal article" date="2016" name="PLoS Pathog.">
        <title>Biosynthesis of antibiotic leucinostatins in bio-control fungus Purpureocillium lilacinum and their inhibition on phytophthora revealed by genome mining.</title>
        <authorList>
            <person name="Wang G."/>
            <person name="Liu Z."/>
            <person name="Lin R."/>
            <person name="Li E."/>
            <person name="Mao Z."/>
            <person name="Ling J."/>
            <person name="Yang Y."/>
            <person name="Yin W.B."/>
            <person name="Xie B."/>
        </authorList>
    </citation>
    <scope>NUCLEOTIDE SEQUENCE [LARGE SCALE GENOMIC DNA]</scope>
    <scope>IDENTIFICATION</scope>
    <scope>FUNCTION</scope>
    <scope>DISRUPTION PHENOTYPE</scope>
    <scope>INDUCTION</scope>
    <scope>PATHWAY</scope>
    <source>
        <strain>PLBJ-1</strain>
    </source>
</reference>